<keyword id="KW-0066">ATP synthesis</keyword>
<keyword id="KW-0138">CF(0)</keyword>
<keyword id="KW-0150">Chloroplast</keyword>
<keyword id="KW-0375">Hydrogen ion transport</keyword>
<keyword id="KW-0406">Ion transport</keyword>
<keyword id="KW-0472">Membrane</keyword>
<keyword id="KW-0934">Plastid</keyword>
<keyword id="KW-0793">Thylakoid</keyword>
<keyword id="KW-0812">Transmembrane</keyword>
<keyword id="KW-1133">Transmembrane helix</keyword>
<keyword id="KW-0813">Transport</keyword>
<reference key="1">
    <citation type="journal article" date="2006" name="BMC Evol. Biol.">
        <title>Complete plastid genome sequences of Drimys, Liriodendron, and Piper: implications for the phylogenetic relationships of magnoliids.</title>
        <authorList>
            <person name="Cai Z."/>
            <person name="Penaflor C."/>
            <person name="Kuehl J.V."/>
            <person name="Leebens-Mack J."/>
            <person name="Carlson J.E."/>
            <person name="dePamphilis C.W."/>
            <person name="Boore J.L."/>
            <person name="Jansen R.K."/>
        </authorList>
    </citation>
    <scope>NUCLEOTIDE SEQUENCE [LARGE SCALE GENOMIC DNA]</scope>
</reference>
<gene>
    <name evidence="1" type="primary">atpF</name>
</gene>
<geneLocation type="chloroplast"/>
<dbReference type="EMBL" id="DQ899947">
    <property type="protein sequence ID" value="ABI32495.1"/>
    <property type="molecule type" value="Genomic_DNA"/>
</dbReference>
<dbReference type="RefSeq" id="YP_740188.1">
    <property type="nucleotide sequence ID" value="NC_008326.1"/>
</dbReference>
<dbReference type="SMR" id="Q0G9N3"/>
<dbReference type="GeneID" id="4266596"/>
<dbReference type="GO" id="GO:0009535">
    <property type="term" value="C:chloroplast thylakoid membrane"/>
    <property type="evidence" value="ECO:0007669"/>
    <property type="project" value="UniProtKB-SubCell"/>
</dbReference>
<dbReference type="GO" id="GO:0045259">
    <property type="term" value="C:proton-transporting ATP synthase complex"/>
    <property type="evidence" value="ECO:0007669"/>
    <property type="project" value="UniProtKB-KW"/>
</dbReference>
<dbReference type="GO" id="GO:0046933">
    <property type="term" value="F:proton-transporting ATP synthase activity, rotational mechanism"/>
    <property type="evidence" value="ECO:0007669"/>
    <property type="project" value="UniProtKB-UniRule"/>
</dbReference>
<dbReference type="CDD" id="cd06503">
    <property type="entry name" value="ATP-synt_Fo_b"/>
    <property type="match status" value="1"/>
</dbReference>
<dbReference type="HAMAP" id="MF_01398">
    <property type="entry name" value="ATP_synth_b_bprime"/>
    <property type="match status" value="1"/>
</dbReference>
<dbReference type="InterPro" id="IPR002146">
    <property type="entry name" value="ATP_synth_b/b'su_bac/chlpt"/>
</dbReference>
<dbReference type="PANTHER" id="PTHR34264">
    <property type="entry name" value="ATP SYNTHASE SUBUNIT B, CHLOROPLASTIC"/>
    <property type="match status" value="1"/>
</dbReference>
<dbReference type="PANTHER" id="PTHR34264:SF3">
    <property type="entry name" value="ATP SYNTHASE SUBUNIT B, CHLOROPLASTIC"/>
    <property type="match status" value="1"/>
</dbReference>
<dbReference type="Pfam" id="PF00430">
    <property type="entry name" value="ATP-synt_B"/>
    <property type="match status" value="1"/>
</dbReference>
<accession>Q0G9N3</accession>
<comment type="function">
    <text evidence="1">F(1)F(0) ATP synthase produces ATP from ADP in the presence of a proton or sodium gradient. F-type ATPases consist of two structural domains, F(1) containing the extramembraneous catalytic core and F(0) containing the membrane proton channel, linked together by a central stalk and a peripheral stalk. During catalysis, ATP synthesis in the catalytic domain of F(1) is coupled via a rotary mechanism of the central stalk subunits to proton translocation.</text>
</comment>
<comment type="function">
    <text evidence="1">Component of the F(0) channel, it forms part of the peripheral stalk, linking F(1) to F(0).</text>
</comment>
<comment type="subunit">
    <text evidence="1">F-type ATPases have 2 components, F(1) - the catalytic core - and F(0) - the membrane proton channel. F(1) has five subunits: alpha(3), beta(3), gamma(1), delta(1), epsilon(1). F(0) has four main subunits: a(1), b(1), b'(1) and c(10-14). The alpha and beta chains form an alternating ring which encloses part of the gamma chain. F(1) is attached to F(0) by a central stalk formed by the gamma and epsilon chains, while a peripheral stalk is formed by the delta, b and b' chains.</text>
</comment>
<comment type="subcellular location">
    <subcellularLocation>
        <location evidence="1">Plastid</location>
        <location evidence="1">Chloroplast thylakoid membrane</location>
        <topology evidence="1">Single-pass membrane protein</topology>
    </subcellularLocation>
</comment>
<comment type="miscellaneous">
    <text>In plastids the F-type ATPase is also known as CF(1)CF(0).</text>
</comment>
<comment type="similarity">
    <text evidence="1">Belongs to the ATPase B chain family.</text>
</comment>
<protein>
    <recommendedName>
        <fullName evidence="1">ATP synthase subunit b, chloroplastic</fullName>
    </recommendedName>
    <alternativeName>
        <fullName evidence="1">ATP synthase F(0) sector subunit b</fullName>
    </alternativeName>
    <alternativeName>
        <fullName evidence="1">ATPase subunit I</fullName>
    </alternativeName>
</protein>
<evidence type="ECO:0000255" key="1">
    <source>
        <dbReference type="HAMAP-Rule" id="MF_01398"/>
    </source>
</evidence>
<proteinExistence type="inferred from homology"/>
<sequence>MKNVTDSFVSLGYWPSAGSFGFNTDILATNLINLSVVLGVLIFFGKGVLSDLLDNRKQRILSTIRNSEELREGAIEQLEKARARLRKVEMEADEFRVNGYSEIEREKQNLINATYENLERLENYKNETIHFEEQRAINQVRQRVFQQALQGALGTLNSCSNSELHLRTISANIGVLGAMKEITD</sequence>
<name>ATPF_LIRTU</name>
<feature type="chain" id="PRO_0000368948" description="ATP synthase subunit b, chloroplastic">
    <location>
        <begin position="1"/>
        <end position="184"/>
    </location>
</feature>
<feature type="transmembrane region" description="Helical" evidence="1">
    <location>
        <begin position="27"/>
        <end position="49"/>
    </location>
</feature>
<organism>
    <name type="scientific">Liriodendron tulipifera</name>
    <name type="common">Tuliptree</name>
    <name type="synonym">Tulip poplar</name>
    <dbReference type="NCBI Taxonomy" id="3415"/>
    <lineage>
        <taxon>Eukaryota</taxon>
        <taxon>Viridiplantae</taxon>
        <taxon>Streptophyta</taxon>
        <taxon>Embryophyta</taxon>
        <taxon>Tracheophyta</taxon>
        <taxon>Spermatophyta</taxon>
        <taxon>Magnoliopsida</taxon>
        <taxon>Magnoliidae</taxon>
        <taxon>Magnoliales</taxon>
        <taxon>Magnoliaceae</taxon>
        <taxon>Liriodendron</taxon>
    </lineage>
</organism>